<dbReference type="EC" id="4.2.3.3" evidence="1"/>
<dbReference type="EMBL" id="CU633749">
    <property type="protein sequence ID" value="CAQ68843.1"/>
    <property type="molecule type" value="Genomic_DNA"/>
</dbReference>
<dbReference type="RefSeq" id="WP_012352179.1">
    <property type="nucleotide sequence ID" value="NC_010528.1"/>
</dbReference>
<dbReference type="SMR" id="B3R3G1"/>
<dbReference type="GeneID" id="29762433"/>
<dbReference type="KEGG" id="cti:RALTA_A0877"/>
<dbReference type="eggNOG" id="COG1803">
    <property type="taxonomic scope" value="Bacteria"/>
</dbReference>
<dbReference type="HOGENOM" id="CLU_120420_0_1_4"/>
<dbReference type="BioCyc" id="CTAI977880:RALTA_RS04160-MONOMER"/>
<dbReference type="Proteomes" id="UP000001692">
    <property type="component" value="Chromosome 1"/>
</dbReference>
<dbReference type="GO" id="GO:0005829">
    <property type="term" value="C:cytosol"/>
    <property type="evidence" value="ECO:0007669"/>
    <property type="project" value="TreeGrafter"/>
</dbReference>
<dbReference type="GO" id="GO:0008929">
    <property type="term" value="F:methylglyoxal synthase activity"/>
    <property type="evidence" value="ECO:0007669"/>
    <property type="project" value="UniProtKB-UniRule"/>
</dbReference>
<dbReference type="GO" id="GO:0019242">
    <property type="term" value="P:methylglyoxal biosynthetic process"/>
    <property type="evidence" value="ECO:0007669"/>
    <property type="project" value="UniProtKB-UniRule"/>
</dbReference>
<dbReference type="CDD" id="cd01422">
    <property type="entry name" value="MGS"/>
    <property type="match status" value="1"/>
</dbReference>
<dbReference type="Gene3D" id="3.40.50.1380">
    <property type="entry name" value="Methylglyoxal synthase-like domain"/>
    <property type="match status" value="1"/>
</dbReference>
<dbReference type="HAMAP" id="MF_00549">
    <property type="entry name" value="Methylglyoxal_synth"/>
    <property type="match status" value="1"/>
</dbReference>
<dbReference type="InterPro" id="IPR004363">
    <property type="entry name" value="Methylgl_synth"/>
</dbReference>
<dbReference type="InterPro" id="IPR018148">
    <property type="entry name" value="Methylglyoxal_synth_AS"/>
</dbReference>
<dbReference type="InterPro" id="IPR011607">
    <property type="entry name" value="MGS-like_dom"/>
</dbReference>
<dbReference type="InterPro" id="IPR036914">
    <property type="entry name" value="MGS-like_dom_sf"/>
</dbReference>
<dbReference type="NCBIfam" id="TIGR00160">
    <property type="entry name" value="MGSA"/>
    <property type="match status" value="1"/>
</dbReference>
<dbReference type="NCBIfam" id="NF003559">
    <property type="entry name" value="PRK05234.1"/>
    <property type="match status" value="1"/>
</dbReference>
<dbReference type="PANTHER" id="PTHR30492">
    <property type="entry name" value="METHYLGLYOXAL SYNTHASE"/>
    <property type="match status" value="1"/>
</dbReference>
<dbReference type="PANTHER" id="PTHR30492:SF0">
    <property type="entry name" value="METHYLGLYOXAL SYNTHASE"/>
    <property type="match status" value="1"/>
</dbReference>
<dbReference type="Pfam" id="PF02142">
    <property type="entry name" value="MGS"/>
    <property type="match status" value="1"/>
</dbReference>
<dbReference type="PIRSF" id="PIRSF006614">
    <property type="entry name" value="Methylglyox_syn"/>
    <property type="match status" value="1"/>
</dbReference>
<dbReference type="SMART" id="SM00851">
    <property type="entry name" value="MGS"/>
    <property type="match status" value="1"/>
</dbReference>
<dbReference type="SUPFAM" id="SSF52335">
    <property type="entry name" value="Methylglyoxal synthase-like"/>
    <property type="match status" value="1"/>
</dbReference>
<dbReference type="PROSITE" id="PS01335">
    <property type="entry name" value="METHYLGLYOXAL_SYNTH"/>
    <property type="match status" value="1"/>
</dbReference>
<dbReference type="PROSITE" id="PS51855">
    <property type="entry name" value="MGS"/>
    <property type="match status" value="1"/>
</dbReference>
<organism>
    <name type="scientific">Cupriavidus taiwanensis (strain DSM 17343 / BCRC 17206 / CCUG 44338 / CIP 107171 / LMG 19424 / R1)</name>
    <name type="common">Ralstonia taiwanensis (strain LMG 19424)</name>
    <dbReference type="NCBI Taxonomy" id="977880"/>
    <lineage>
        <taxon>Bacteria</taxon>
        <taxon>Pseudomonadati</taxon>
        <taxon>Pseudomonadota</taxon>
        <taxon>Betaproteobacteria</taxon>
        <taxon>Burkholderiales</taxon>
        <taxon>Burkholderiaceae</taxon>
        <taxon>Cupriavidus</taxon>
    </lineage>
</organism>
<feature type="chain" id="PRO_1000128985" description="Methylglyoxal synthase">
    <location>
        <begin position="1"/>
        <end position="133"/>
    </location>
</feature>
<feature type="domain" description="MGS-like" evidence="1">
    <location>
        <begin position="1"/>
        <end position="133"/>
    </location>
</feature>
<feature type="active site" description="Proton donor/acceptor" evidence="1">
    <location>
        <position position="64"/>
    </location>
</feature>
<feature type="binding site" evidence="1">
    <location>
        <position position="12"/>
    </location>
    <ligand>
        <name>substrate</name>
    </ligand>
</feature>
<feature type="binding site" evidence="1">
    <location>
        <position position="16"/>
    </location>
    <ligand>
        <name>substrate</name>
    </ligand>
</feature>
<feature type="binding site" evidence="1">
    <location>
        <begin position="38"/>
        <end position="41"/>
    </location>
    <ligand>
        <name>substrate</name>
    </ligand>
</feature>
<feature type="binding site" evidence="1">
    <location>
        <begin position="58"/>
        <end position="59"/>
    </location>
    <ligand>
        <name>substrate</name>
    </ligand>
</feature>
<feature type="binding site" evidence="1">
    <location>
        <position position="91"/>
    </location>
    <ligand>
        <name>substrate</name>
    </ligand>
</feature>
<keyword id="KW-0456">Lyase</keyword>
<proteinExistence type="inferred from homology"/>
<name>MGSA_CUPTR</name>
<protein>
    <recommendedName>
        <fullName evidence="1">Methylglyoxal synthase</fullName>
        <shortName evidence="1">MGS</shortName>
        <ecNumber evidence="1">4.2.3.3</ecNumber>
    </recommendedName>
</protein>
<comment type="function">
    <text evidence="1">Catalyzes the formation of methylglyoxal from dihydroxyacetone phosphate.</text>
</comment>
<comment type="catalytic activity">
    <reaction evidence="1">
        <text>dihydroxyacetone phosphate = methylglyoxal + phosphate</text>
        <dbReference type="Rhea" id="RHEA:17937"/>
        <dbReference type="ChEBI" id="CHEBI:17158"/>
        <dbReference type="ChEBI" id="CHEBI:43474"/>
        <dbReference type="ChEBI" id="CHEBI:57642"/>
        <dbReference type="EC" id="4.2.3.3"/>
    </reaction>
</comment>
<comment type="similarity">
    <text evidence="1">Belongs to the methylglyoxal synthase family.</text>
</comment>
<sequence>MPPKPRIALIAHDHKKDDIVAFAARHRAFLSQCELLATGTTGGRLIDEVGLDVTRMLSGPWGGDLQIGAQLAEGRVSAVVFLRDPMTPQPHEPDINALVRACDVHNVPCATNVASAELLLAGLARENGAAQAG</sequence>
<reference key="1">
    <citation type="journal article" date="2008" name="Genome Res.">
        <title>Genome sequence of the beta-rhizobium Cupriavidus taiwanensis and comparative genomics of rhizobia.</title>
        <authorList>
            <person name="Amadou C."/>
            <person name="Pascal G."/>
            <person name="Mangenot S."/>
            <person name="Glew M."/>
            <person name="Bontemps C."/>
            <person name="Capela D."/>
            <person name="Carrere S."/>
            <person name="Cruveiller S."/>
            <person name="Dossat C."/>
            <person name="Lajus A."/>
            <person name="Marchetti M."/>
            <person name="Poinsot V."/>
            <person name="Rouy Z."/>
            <person name="Servin B."/>
            <person name="Saad M."/>
            <person name="Schenowitz C."/>
            <person name="Barbe V."/>
            <person name="Batut J."/>
            <person name="Medigue C."/>
            <person name="Masson-Boivin C."/>
        </authorList>
    </citation>
    <scope>NUCLEOTIDE SEQUENCE [LARGE SCALE GENOMIC DNA]</scope>
    <source>
        <strain>DSM 17343 / BCRC 17206 / CCUG 44338 / CIP 107171 / LMG 19424 / R1</strain>
    </source>
</reference>
<evidence type="ECO:0000255" key="1">
    <source>
        <dbReference type="HAMAP-Rule" id="MF_00549"/>
    </source>
</evidence>
<accession>B3R3G1</accession>
<gene>
    <name evidence="1" type="primary">mgsA</name>
    <name type="ordered locus">RALTA_A0877</name>
</gene>